<accession>Q7CQD4</accession>
<accession>Q9KIZ2</accession>
<accession>Q9L8K7</accession>
<comment type="function">
    <text evidence="3 4">Activator for CDC42 by directly engaging this Rho GTPase and acting as potent guanine nucleotide exchange factor (GEF). This activation results in actin cytoskeleton rearrangements and stimulates membrane ruffling, promoting bacterial entry into non-phagocytic cells. Also activates NF-kB, p38 and ERK kinases, which are known to be involved in the induction of IL-8 expression. Chaperone InvB is required for secretion, translocation and stabilization of intracellular levels of sopE2.</text>
</comment>
<comment type="subcellular location">
    <subcellularLocation>
        <location>Secreted</location>
    </subcellularLocation>
    <text>Secreted via the type III secretion system 1 (SPI-1 T3SS).</text>
</comment>
<comment type="miscellaneous">
    <text>SopE2 is highly conserved among Salmonella isolates of the SARA collection.</text>
</comment>
<comment type="similarity">
    <text evidence="5">Belongs to the GEF (guanine exchange factor) SopE family.</text>
</comment>
<feature type="initiator methionine" description="Removed" evidence="2">
    <location>
        <position position="1"/>
    </location>
</feature>
<feature type="chain" id="PRO_0000220742" description="Guanine nucleotide exchange factor sopE2">
    <location>
        <begin position="2"/>
        <end position="240"/>
    </location>
</feature>
<feature type="region of interest" description="GEF catalytic domain" evidence="1">
    <location>
        <begin position="78"/>
        <end position="240"/>
    </location>
</feature>
<feature type="sequence variant" description="In strain: F98.">
    <original>Q</original>
    <variation>H</variation>
    <location>
        <position position="125"/>
    </location>
</feature>
<feature type="strand" evidence="6">
    <location>
        <begin position="80"/>
        <end position="82"/>
    </location>
</feature>
<feature type="helix" evidence="6">
    <location>
        <begin position="83"/>
        <end position="94"/>
    </location>
</feature>
<feature type="helix" evidence="6">
    <location>
        <begin position="96"/>
        <end position="102"/>
    </location>
</feature>
<feature type="helix" evidence="6">
    <location>
        <begin position="104"/>
        <end position="133"/>
    </location>
</feature>
<feature type="helix" evidence="6">
    <location>
        <begin position="137"/>
        <end position="150"/>
    </location>
</feature>
<feature type="strand" evidence="6">
    <location>
        <begin position="155"/>
        <end position="157"/>
    </location>
</feature>
<feature type="strand" evidence="6">
    <location>
        <begin position="162"/>
        <end position="164"/>
    </location>
</feature>
<feature type="helix" evidence="6">
    <location>
        <begin position="173"/>
        <end position="183"/>
    </location>
</feature>
<feature type="helix" evidence="6">
    <location>
        <begin position="185"/>
        <end position="188"/>
    </location>
</feature>
<feature type="helix" evidence="6">
    <location>
        <begin position="191"/>
        <end position="209"/>
    </location>
</feature>
<feature type="helix" evidence="6">
    <location>
        <begin position="210"/>
        <end position="213"/>
    </location>
</feature>
<feature type="strand" evidence="6">
    <location>
        <begin position="215"/>
        <end position="217"/>
    </location>
</feature>
<feature type="helix" evidence="6">
    <location>
        <begin position="221"/>
        <end position="237"/>
    </location>
</feature>
<gene>
    <name type="primary">sopE2</name>
    <name type="ordered locus">STM1855</name>
</gene>
<proteinExistence type="evidence at protein level"/>
<name>SOPE2_SALTY</name>
<organism>
    <name type="scientific">Salmonella typhimurium (strain LT2 / SGSC1412 / ATCC 700720)</name>
    <dbReference type="NCBI Taxonomy" id="99287"/>
    <lineage>
        <taxon>Bacteria</taxon>
        <taxon>Pseudomonadati</taxon>
        <taxon>Pseudomonadota</taxon>
        <taxon>Gammaproteobacteria</taxon>
        <taxon>Enterobacterales</taxon>
        <taxon>Enterobacteriaceae</taxon>
        <taxon>Salmonella</taxon>
    </lineage>
</organism>
<keyword id="KW-0002">3D-structure</keyword>
<keyword id="KW-0903">Direct protein sequencing</keyword>
<keyword id="KW-0343">GTPase activation</keyword>
<keyword id="KW-0344">Guanine-nucleotide releasing factor</keyword>
<keyword id="KW-1185">Reference proteome</keyword>
<keyword id="KW-0964">Secreted</keyword>
<keyword id="KW-0843">Virulence</keyword>
<reference key="1">
    <citation type="journal article" date="2000" name="J. Bacteriol.">
        <title>Identification of SopE2, a Salmonella secreted protein which is highly homologous to SopE and involved in bacterial invasion of epithelial cells.</title>
        <authorList>
            <person name="Bakshi C.S."/>
            <person name="Singh V.P."/>
            <person name="Wood M.W."/>
            <person name="Jones P.W."/>
            <person name="Wallis T.S."/>
            <person name="Galyov E.E."/>
        </authorList>
    </citation>
    <scope>NUCLEOTIDE SEQUENCE [GENOMIC DNA]</scope>
    <scope>PROTEIN SEQUENCE OF 2-16</scope>
    <source>
        <strain>F98</strain>
    </source>
</reference>
<reference key="2">
    <citation type="journal article" date="2000" name="Mol. Microbiol.">
        <title>Identification of SopE2 from Salmonella typhimurium, a conserved guanine nucleotide exchange factor for Cdc42 of the host cell.</title>
        <authorList>
            <person name="Stender S."/>
            <person name="Friebel A."/>
            <person name="Linder S."/>
            <person name="Rohde M."/>
            <person name="Mirold S."/>
            <person name="Hardt W.-D."/>
        </authorList>
    </citation>
    <scope>NUCLEOTIDE SEQUENCE [GENOMIC DNA]</scope>
    <scope>FUNCTION</scope>
    <source>
        <strain>SL1344</strain>
    </source>
</reference>
<reference key="3">
    <citation type="journal article" date="2001" name="Nature">
        <title>Complete genome sequence of Salmonella enterica serovar Typhimurium LT2.</title>
        <authorList>
            <person name="McClelland M."/>
            <person name="Sanderson K.E."/>
            <person name="Spieth J."/>
            <person name="Clifton S.W."/>
            <person name="Latreille P."/>
            <person name="Courtney L."/>
            <person name="Porwollik S."/>
            <person name="Ali J."/>
            <person name="Dante M."/>
            <person name="Du F."/>
            <person name="Hou S."/>
            <person name="Layman D."/>
            <person name="Leonard S."/>
            <person name="Nguyen C."/>
            <person name="Scott K."/>
            <person name="Holmes A."/>
            <person name="Grewal N."/>
            <person name="Mulvaney E."/>
            <person name="Ryan E."/>
            <person name="Sun H."/>
            <person name="Florea L."/>
            <person name="Miller W."/>
            <person name="Stoneking T."/>
            <person name="Nhan M."/>
            <person name="Waterston R."/>
            <person name="Wilson R.K."/>
        </authorList>
    </citation>
    <scope>NUCLEOTIDE SEQUENCE [LARGE SCALE GENOMIC DNA]</scope>
    <source>
        <strain>LT2 / SGSC1412 / ATCC 700720</strain>
    </source>
</reference>
<reference key="4">
    <citation type="journal article" date="2003" name="J. Bacteriol.">
        <title>Role of the Salmonella pathogenicity island 1 (SPI-1) protein InvB in type III secretion of SopE and SopE2, two Salmonella effector proteins encoded outside of SPI-1.</title>
        <authorList>
            <person name="Ehrbar K."/>
            <person name="Friebel A."/>
            <person name="Miller S.I."/>
            <person name="Hardt W.-D."/>
        </authorList>
    </citation>
    <scope>INTERACTION WITH CHAPERONE INVB</scope>
    <source>
        <strain>SL1344</strain>
    </source>
</reference>
<reference key="5">
    <citation type="journal article" date="2004" name="Infect. Immun.">
        <title>Cooperative interactions between flagellin and SopE2 in the epithelial interleukin-8 response to Salmonella enterica serovar typhimurium infection.</title>
        <authorList>
            <person name="Huang F.-C."/>
            <person name="Werne A."/>
            <person name="Li Q."/>
            <person name="Galyov E.E."/>
            <person name="Walker W.A."/>
            <person name="Cherayil B.J."/>
        </authorList>
    </citation>
    <scope>FUNCTION</scope>
    <source>
        <strain>F98</strain>
    </source>
</reference>
<evidence type="ECO:0000250" key="1"/>
<evidence type="ECO:0000269" key="2">
    <source>
    </source>
</evidence>
<evidence type="ECO:0000269" key="3">
    <source>
    </source>
</evidence>
<evidence type="ECO:0000269" key="4">
    <source>
    </source>
</evidence>
<evidence type="ECO:0000305" key="5"/>
<evidence type="ECO:0007829" key="6">
    <source>
        <dbReference type="PDB" id="1R6E"/>
    </source>
</evidence>
<dbReference type="EMBL" id="AF200952">
    <property type="protein sequence ID" value="AAF63159.1"/>
    <property type="molecule type" value="Genomic_DNA"/>
</dbReference>
<dbReference type="EMBL" id="AF217274">
    <property type="protein sequence ID" value="AAF91225.1"/>
    <property type="molecule type" value="Genomic_DNA"/>
</dbReference>
<dbReference type="EMBL" id="AE006468">
    <property type="protein sequence ID" value="AAL20770.1"/>
    <property type="molecule type" value="Genomic_DNA"/>
</dbReference>
<dbReference type="RefSeq" id="NP_460811.1">
    <property type="nucleotide sequence ID" value="NC_003197.2"/>
</dbReference>
<dbReference type="RefSeq" id="WP_000182072.1">
    <property type="nucleotide sequence ID" value="NC_003197.2"/>
</dbReference>
<dbReference type="PDB" id="1R6E">
    <property type="method" value="NMR"/>
    <property type="chains" value="A=73-240"/>
</dbReference>
<dbReference type="PDB" id="1R9K">
    <property type="method" value="NMR"/>
    <property type="chains" value="A=69-240"/>
</dbReference>
<dbReference type="PDBsum" id="1R6E"/>
<dbReference type="PDBsum" id="1R9K"/>
<dbReference type="BMRB" id="Q7CQD4"/>
<dbReference type="SMR" id="Q7CQD4"/>
<dbReference type="IntAct" id="Q7CQD4">
    <property type="interactions" value="1"/>
</dbReference>
<dbReference type="STRING" id="99287.STM1855"/>
<dbReference type="PaxDb" id="99287-STM1855"/>
<dbReference type="GeneID" id="1253374"/>
<dbReference type="KEGG" id="stm:STM1855"/>
<dbReference type="PATRIC" id="fig|99287.12.peg.1960"/>
<dbReference type="HOGENOM" id="CLU_107159_0_0_6"/>
<dbReference type="OMA" id="LDIKSHA"/>
<dbReference type="BioCyc" id="SENT99287:STM1855-MONOMER"/>
<dbReference type="EvolutionaryTrace" id="Q7CQD4"/>
<dbReference type="PHI-base" id="PHI:6800"/>
<dbReference type="PHI-base" id="PHI:7921"/>
<dbReference type="Proteomes" id="UP000001014">
    <property type="component" value="Chromosome"/>
</dbReference>
<dbReference type="GO" id="GO:0005576">
    <property type="term" value="C:extracellular region"/>
    <property type="evidence" value="ECO:0007669"/>
    <property type="project" value="UniProtKB-SubCell"/>
</dbReference>
<dbReference type="GO" id="GO:0005096">
    <property type="term" value="F:GTPase activator activity"/>
    <property type="evidence" value="ECO:0007669"/>
    <property type="project" value="UniProtKB-KW"/>
</dbReference>
<dbReference type="GO" id="GO:0005085">
    <property type="term" value="F:guanyl-nucleotide exchange factor activity"/>
    <property type="evidence" value="ECO:0007669"/>
    <property type="project" value="UniProtKB-KW"/>
</dbReference>
<dbReference type="GO" id="GO:0030036">
    <property type="term" value="P:actin cytoskeleton organization"/>
    <property type="evidence" value="ECO:0007669"/>
    <property type="project" value="InterPro"/>
</dbReference>
<dbReference type="Gene3D" id="1.10.4120.10">
    <property type="entry name" value="SopE-like, GEF domain"/>
    <property type="match status" value="1"/>
</dbReference>
<dbReference type="InterPro" id="IPR005414">
    <property type="entry name" value="SopE"/>
</dbReference>
<dbReference type="InterPro" id="IPR035949">
    <property type="entry name" value="SopE-like_GEF_dom_sf"/>
</dbReference>
<dbReference type="InterPro" id="IPR016019">
    <property type="entry name" value="SopE_GEF_dom"/>
</dbReference>
<dbReference type="InterPro" id="IPR016018">
    <property type="entry name" value="SopE_N_dom"/>
</dbReference>
<dbReference type="NCBIfam" id="NF011810">
    <property type="entry name" value="PRK15280.1"/>
    <property type="match status" value="1"/>
</dbReference>
<dbReference type="Pfam" id="PF05364">
    <property type="entry name" value="SecIII_SopE_N"/>
    <property type="match status" value="1"/>
</dbReference>
<dbReference type="Pfam" id="PF07487">
    <property type="entry name" value="SopE_GEF"/>
    <property type="match status" value="1"/>
</dbReference>
<dbReference type="PIRSF" id="PIRSF034781">
    <property type="entry name" value="SecIII_sopE"/>
    <property type="match status" value="1"/>
</dbReference>
<dbReference type="PRINTS" id="PR01593">
    <property type="entry name" value="SOPEPROTEIN"/>
</dbReference>
<dbReference type="SUPFAM" id="SSF81832">
    <property type="entry name" value="SopE-like GEF domain"/>
    <property type="match status" value="1"/>
</dbReference>
<sequence length="240" mass="26448">MTNITLSTQHYRIHRSDVEPVKEKTTEKDIFAKSITAVRNSFISLSTSLSDRFSLHQQTDIPTTHFHRGNASEGRAVLTSKTVKDFMLQKLNSLDIKGNASKDPAYARQTCEAILSAVYSNNKDQCCKLLISKGVSITPFLKEIGEAAQNAGLPGEIKNGVFTPGGAGANPFVVPLIASASIKYPHMFINHNQQVSFKAYAEKIVMKEVTPLFNKGTMPTPQQFQLTIENIANKYLQNAS</sequence>
<protein>
    <recommendedName>
        <fullName>Guanine nucleotide exchange factor sopE2</fullName>
    </recommendedName>
    <alternativeName>
        <fullName>Effector protein sopE2</fullName>
    </alternativeName>
    <alternativeName>
        <fullName>Toxin sopE2</fullName>
    </alternativeName>
</protein>